<dbReference type="EMBL" id="CP001124">
    <property type="protein sequence ID" value="ACH37895.1"/>
    <property type="molecule type" value="Genomic_DNA"/>
</dbReference>
<dbReference type="RefSeq" id="WP_012529306.1">
    <property type="nucleotide sequence ID" value="NC_011146.1"/>
</dbReference>
<dbReference type="SMR" id="B5EEZ9"/>
<dbReference type="STRING" id="404380.Gbem_0872"/>
<dbReference type="KEGG" id="gbm:Gbem_0872"/>
<dbReference type="eggNOG" id="COG1660">
    <property type="taxonomic scope" value="Bacteria"/>
</dbReference>
<dbReference type="HOGENOM" id="CLU_059558_0_0_7"/>
<dbReference type="OrthoDB" id="9784461at2"/>
<dbReference type="Proteomes" id="UP000008825">
    <property type="component" value="Chromosome"/>
</dbReference>
<dbReference type="GO" id="GO:0005524">
    <property type="term" value="F:ATP binding"/>
    <property type="evidence" value="ECO:0007669"/>
    <property type="project" value="UniProtKB-UniRule"/>
</dbReference>
<dbReference type="GO" id="GO:0005525">
    <property type="term" value="F:GTP binding"/>
    <property type="evidence" value="ECO:0007669"/>
    <property type="project" value="UniProtKB-UniRule"/>
</dbReference>
<dbReference type="Gene3D" id="3.40.50.300">
    <property type="entry name" value="P-loop containing nucleotide triphosphate hydrolases"/>
    <property type="match status" value="1"/>
</dbReference>
<dbReference type="HAMAP" id="MF_00636">
    <property type="entry name" value="RapZ_like"/>
    <property type="match status" value="1"/>
</dbReference>
<dbReference type="InterPro" id="IPR027417">
    <property type="entry name" value="P-loop_NTPase"/>
</dbReference>
<dbReference type="InterPro" id="IPR005337">
    <property type="entry name" value="RapZ-like"/>
</dbReference>
<dbReference type="InterPro" id="IPR053930">
    <property type="entry name" value="RapZ-like_N"/>
</dbReference>
<dbReference type="InterPro" id="IPR053931">
    <property type="entry name" value="RapZ_C"/>
</dbReference>
<dbReference type="NCBIfam" id="NF003828">
    <property type="entry name" value="PRK05416.1"/>
    <property type="match status" value="1"/>
</dbReference>
<dbReference type="PANTHER" id="PTHR30448">
    <property type="entry name" value="RNASE ADAPTER PROTEIN RAPZ"/>
    <property type="match status" value="1"/>
</dbReference>
<dbReference type="PANTHER" id="PTHR30448:SF0">
    <property type="entry name" value="RNASE ADAPTER PROTEIN RAPZ"/>
    <property type="match status" value="1"/>
</dbReference>
<dbReference type="Pfam" id="PF22740">
    <property type="entry name" value="PapZ_C"/>
    <property type="match status" value="1"/>
</dbReference>
<dbReference type="Pfam" id="PF03668">
    <property type="entry name" value="RapZ-like_N"/>
    <property type="match status" value="1"/>
</dbReference>
<dbReference type="PIRSF" id="PIRSF005052">
    <property type="entry name" value="P-loopkin"/>
    <property type="match status" value="1"/>
</dbReference>
<dbReference type="SUPFAM" id="SSF52540">
    <property type="entry name" value="P-loop containing nucleoside triphosphate hydrolases"/>
    <property type="match status" value="1"/>
</dbReference>
<reference key="1">
    <citation type="submission" date="2008-07" db="EMBL/GenBank/DDBJ databases">
        <title>Complete sequence of Geobacter bemidjiensis BEM.</title>
        <authorList>
            <consortium name="US DOE Joint Genome Institute"/>
            <person name="Lucas S."/>
            <person name="Copeland A."/>
            <person name="Lapidus A."/>
            <person name="Glavina del Rio T."/>
            <person name="Dalin E."/>
            <person name="Tice H."/>
            <person name="Bruce D."/>
            <person name="Goodwin L."/>
            <person name="Pitluck S."/>
            <person name="Kiss H."/>
            <person name="Brettin T."/>
            <person name="Detter J.C."/>
            <person name="Han C."/>
            <person name="Kuske C.R."/>
            <person name="Schmutz J."/>
            <person name="Larimer F."/>
            <person name="Land M."/>
            <person name="Hauser L."/>
            <person name="Kyrpides N."/>
            <person name="Lykidis A."/>
            <person name="Lovley D."/>
            <person name="Richardson P."/>
        </authorList>
    </citation>
    <scope>NUCLEOTIDE SEQUENCE [LARGE SCALE GENOMIC DNA]</scope>
    <source>
        <strain>ATCC BAA-1014 / DSM 16622 / JCM 12645 / Bem</strain>
    </source>
</reference>
<sequence length="287" mass="32531">MRIVIITGLSGSGKSTAVRALEDEGFFCLDNLPVSLVTTFIELVEHSREDIKDVALVMDIRSRDFIKGYDQVFQAIASAGHSVKIFYFDATDEVLIRRFSETRRRHPALEGATVPEGIRFERDQLAGLRRIATAIIDTSEMNVHRLKELVIGLVKGGEGVLEMQVNLQSFGFRYGLPLESDLVMDVRFLPNPYFVATLRPFSGLDQGVREYVMGHKETVVFLEHFRDMLELLLPSYRREGKSYLSVSIGCTGGRHRSVAIAEELYNYFRQRNVNIKITHRDIDKGLG</sequence>
<protein>
    <recommendedName>
        <fullName evidence="1">Nucleotide-binding protein Gbem_0872</fullName>
    </recommendedName>
</protein>
<accession>B5EEZ9</accession>
<name>Y872_CITBB</name>
<evidence type="ECO:0000255" key="1">
    <source>
        <dbReference type="HAMAP-Rule" id="MF_00636"/>
    </source>
</evidence>
<organism>
    <name type="scientific">Citrifermentans bemidjiense (strain ATCC BAA-1014 / DSM 16622 / JCM 12645 / Bem)</name>
    <name type="common">Geobacter bemidjiensis</name>
    <dbReference type="NCBI Taxonomy" id="404380"/>
    <lineage>
        <taxon>Bacteria</taxon>
        <taxon>Pseudomonadati</taxon>
        <taxon>Thermodesulfobacteriota</taxon>
        <taxon>Desulfuromonadia</taxon>
        <taxon>Geobacterales</taxon>
        <taxon>Geobacteraceae</taxon>
        <taxon>Citrifermentans</taxon>
    </lineage>
</organism>
<feature type="chain" id="PRO_1000130761" description="Nucleotide-binding protein Gbem_0872">
    <location>
        <begin position="1"/>
        <end position="287"/>
    </location>
</feature>
<feature type="binding site" evidence="1">
    <location>
        <begin position="8"/>
        <end position="15"/>
    </location>
    <ligand>
        <name>ATP</name>
        <dbReference type="ChEBI" id="CHEBI:30616"/>
    </ligand>
</feature>
<feature type="binding site" evidence="1">
    <location>
        <begin position="59"/>
        <end position="62"/>
    </location>
    <ligand>
        <name>GTP</name>
        <dbReference type="ChEBI" id="CHEBI:37565"/>
    </ligand>
</feature>
<keyword id="KW-0067">ATP-binding</keyword>
<keyword id="KW-0342">GTP-binding</keyword>
<keyword id="KW-0547">Nucleotide-binding</keyword>
<keyword id="KW-1185">Reference proteome</keyword>
<gene>
    <name type="ordered locus">Gbem_0872</name>
</gene>
<comment type="function">
    <text evidence="1">Displays ATPase and GTPase activities.</text>
</comment>
<comment type="similarity">
    <text evidence="1">Belongs to the RapZ-like family.</text>
</comment>
<proteinExistence type="inferred from homology"/>